<name>TRUA_STRGC</name>
<accession>A8AVB3</accession>
<sequence>MTRYKAIISYDGHDFAGFQRQPHARSVQEEIEKTLTRINKGQPVVIHGAGRTDSGVHALGQVLHFDLPEERDGEKLRFALDTQTPEDIDFISVEQVSDDFHSRYNKHSKTYEFLVDIGRPKNPMMRHYATHYPYPLELSLLEEAITQLEGTHDFTGFTASGTSVEDKVRTITEAKVRYDAERNFLVFTFSGNGFLYKQIRNMVGTLLKIGNKRMPVEQIQRILAEKDRHLAGPTAGPNGLYLKEIRYEE</sequence>
<gene>
    <name evidence="1" type="primary">truA</name>
    <name type="ordered locus">SGO_0407</name>
</gene>
<reference key="1">
    <citation type="journal article" date="2007" name="J. Bacteriol.">
        <title>Genome-wide transcriptional changes in Streptococcus gordonii in response to competence signaling peptide.</title>
        <authorList>
            <person name="Vickerman M.M."/>
            <person name="Iobst S."/>
            <person name="Jesionowski A.M."/>
            <person name="Gill S.R."/>
        </authorList>
    </citation>
    <scope>NUCLEOTIDE SEQUENCE [LARGE SCALE GENOMIC DNA]</scope>
    <source>
        <strain>Challis / ATCC 35105 / BCRC 15272 / CH1 / DL1 / V288</strain>
    </source>
</reference>
<proteinExistence type="inferred from homology"/>
<dbReference type="EC" id="5.4.99.12" evidence="1"/>
<dbReference type="EMBL" id="CP000725">
    <property type="protein sequence ID" value="ABV10196.1"/>
    <property type="molecule type" value="Genomic_DNA"/>
</dbReference>
<dbReference type="RefSeq" id="WP_011999919.1">
    <property type="nucleotide sequence ID" value="NC_009785.1"/>
</dbReference>
<dbReference type="SMR" id="A8AVB3"/>
<dbReference type="STRING" id="467705.SGO_0407"/>
<dbReference type="KEGG" id="sgo:SGO_0407"/>
<dbReference type="eggNOG" id="COG0101">
    <property type="taxonomic scope" value="Bacteria"/>
</dbReference>
<dbReference type="HOGENOM" id="CLU_014673_0_1_9"/>
<dbReference type="Proteomes" id="UP000001131">
    <property type="component" value="Chromosome"/>
</dbReference>
<dbReference type="GO" id="GO:0003723">
    <property type="term" value="F:RNA binding"/>
    <property type="evidence" value="ECO:0007669"/>
    <property type="project" value="InterPro"/>
</dbReference>
<dbReference type="GO" id="GO:0160147">
    <property type="term" value="F:tRNA pseudouridine(38-40) synthase activity"/>
    <property type="evidence" value="ECO:0007669"/>
    <property type="project" value="UniProtKB-EC"/>
</dbReference>
<dbReference type="GO" id="GO:0031119">
    <property type="term" value="P:tRNA pseudouridine synthesis"/>
    <property type="evidence" value="ECO:0007669"/>
    <property type="project" value="UniProtKB-UniRule"/>
</dbReference>
<dbReference type="CDD" id="cd02570">
    <property type="entry name" value="PseudoU_synth_EcTruA"/>
    <property type="match status" value="1"/>
</dbReference>
<dbReference type="FunFam" id="3.30.70.580:FF:000001">
    <property type="entry name" value="tRNA pseudouridine synthase A"/>
    <property type="match status" value="1"/>
</dbReference>
<dbReference type="Gene3D" id="3.30.70.660">
    <property type="entry name" value="Pseudouridine synthase I, catalytic domain, C-terminal subdomain"/>
    <property type="match status" value="1"/>
</dbReference>
<dbReference type="Gene3D" id="3.30.70.580">
    <property type="entry name" value="Pseudouridine synthase I, catalytic domain, N-terminal subdomain"/>
    <property type="match status" value="1"/>
</dbReference>
<dbReference type="HAMAP" id="MF_00171">
    <property type="entry name" value="TruA"/>
    <property type="match status" value="1"/>
</dbReference>
<dbReference type="InterPro" id="IPR020103">
    <property type="entry name" value="PsdUridine_synth_cat_dom_sf"/>
</dbReference>
<dbReference type="InterPro" id="IPR001406">
    <property type="entry name" value="PsdUridine_synth_TruA"/>
</dbReference>
<dbReference type="InterPro" id="IPR020097">
    <property type="entry name" value="PsdUridine_synth_TruA_a/b_dom"/>
</dbReference>
<dbReference type="InterPro" id="IPR020095">
    <property type="entry name" value="PsdUridine_synth_TruA_C"/>
</dbReference>
<dbReference type="InterPro" id="IPR020094">
    <property type="entry name" value="TruA/RsuA/RluB/E/F_N"/>
</dbReference>
<dbReference type="NCBIfam" id="TIGR00071">
    <property type="entry name" value="hisT_truA"/>
    <property type="match status" value="1"/>
</dbReference>
<dbReference type="PANTHER" id="PTHR11142">
    <property type="entry name" value="PSEUDOURIDYLATE SYNTHASE"/>
    <property type="match status" value="1"/>
</dbReference>
<dbReference type="PANTHER" id="PTHR11142:SF0">
    <property type="entry name" value="TRNA PSEUDOURIDINE SYNTHASE-LIKE 1"/>
    <property type="match status" value="1"/>
</dbReference>
<dbReference type="Pfam" id="PF01416">
    <property type="entry name" value="PseudoU_synth_1"/>
    <property type="match status" value="2"/>
</dbReference>
<dbReference type="PIRSF" id="PIRSF001430">
    <property type="entry name" value="tRNA_psdUrid_synth"/>
    <property type="match status" value="1"/>
</dbReference>
<dbReference type="SUPFAM" id="SSF55120">
    <property type="entry name" value="Pseudouridine synthase"/>
    <property type="match status" value="1"/>
</dbReference>
<feature type="chain" id="PRO_1000077108" description="tRNA pseudouridine synthase A">
    <location>
        <begin position="1"/>
        <end position="249"/>
    </location>
</feature>
<feature type="active site" description="Nucleophile" evidence="1">
    <location>
        <position position="53"/>
    </location>
</feature>
<feature type="binding site" evidence="1">
    <location>
        <position position="111"/>
    </location>
    <ligand>
        <name>substrate</name>
    </ligand>
</feature>
<organism>
    <name type="scientific">Streptococcus gordonii (strain Challis / ATCC 35105 / BCRC 15272 / CH1 / DL1 / V288)</name>
    <dbReference type="NCBI Taxonomy" id="467705"/>
    <lineage>
        <taxon>Bacteria</taxon>
        <taxon>Bacillati</taxon>
        <taxon>Bacillota</taxon>
        <taxon>Bacilli</taxon>
        <taxon>Lactobacillales</taxon>
        <taxon>Streptococcaceae</taxon>
        <taxon>Streptococcus</taxon>
    </lineage>
</organism>
<evidence type="ECO:0000255" key="1">
    <source>
        <dbReference type="HAMAP-Rule" id="MF_00171"/>
    </source>
</evidence>
<comment type="function">
    <text evidence="1">Formation of pseudouridine at positions 38, 39 and 40 in the anticodon stem and loop of transfer RNAs.</text>
</comment>
<comment type="catalytic activity">
    <reaction evidence="1">
        <text>uridine(38/39/40) in tRNA = pseudouridine(38/39/40) in tRNA</text>
        <dbReference type="Rhea" id="RHEA:22376"/>
        <dbReference type="Rhea" id="RHEA-COMP:10085"/>
        <dbReference type="Rhea" id="RHEA-COMP:10087"/>
        <dbReference type="ChEBI" id="CHEBI:65314"/>
        <dbReference type="ChEBI" id="CHEBI:65315"/>
        <dbReference type="EC" id="5.4.99.12"/>
    </reaction>
</comment>
<comment type="subunit">
    <text evidence="1">Homodimer.</text>
</comment>
<comment type="similarity">
    <text evidence="1">Belongs to the tRNA pseudouridine synthase TruA family.</text>
</comment>
<protein>
    <recommendedName>
        <fullName evidence="1">tRNA pseudouridine synthase A</fullName>
        <ecNumber evidence="1">5.4.99.12</ecNumber>
    </recommendedName>
    <alternativeName>
        <fullName evidence="1">tRNA pseudouridine(38-40) synthase</fullName>
    </alternativeName>
    <alternativeName>
        <fullName evidence="1">tRNA pseudouridylate synthase I</fullName>
    </alternativeName>
    <alternativeName>
        <fullName evidence="1">tRNA-uridine isomerase I</fullName>
    </alternativeName>
</protein>
<keyword id="KW-0413">Isomerase</keyword>
<keyword id="KW-1185">Reference proteome</keyword>
<keyword id="KW-0819">tRNA processing</keyword>